<accession>B1IYZ1</accession>
<protein>
    <recommendedName>
        <fullName evidence="1">Probable lipid kinase YegS</fullName>
        <ecNumber evidence="1">2.7.1.-</ecNumber>
    </recommendedName>
</protein>
<comment type="function">
    <text evidence="1">Probably phosphorylates lipids; the in vivo substrate is unknown.</text>
</comment>
<comment type="cofactor">
    <cofactor evidence="1">
        <name>Mg(2+)</name>
        <dbReference type="ChEBI" id="CHEBI:18420"/>
    </cofactor>
    <cofactor evidence="1">
        <name>Ca(2+)</name>
        <dbReference type="ChEBI" id="CHEBI:29108"/>
    </cofactor>
    <text evidence="1">Binds 1 Mg(2+) ion per subunit. Ca(2+) may be able to substitute.</text>
</comment>
<comment type="subcellular location">
    <subcellularLocation>
        <location evidence="1">Cytoplasm</location>
    </subcellularLocation>
</comment>
<comment type="similarity">
    <text evidence="1">Belongs to the diacylglycerol/lipid kinase family. YegS lipid kinase subfamily.</text>
</comment>
<reference key="1">
    <citation type="submission" date="2008-02" db="EMBL/GenBank/DDBJ databases">
        <title>Complete sequence of Escherichia coli C str. ATCC 8739.</title>
        <authorList>
            <person name="Copeland A."/>
            <person name="Lucas S."/>
            <person name="Lapidus A."/>
            <person name="Glavina del Rio T."/>
            <person name="Dalin E."/>
            <person name="Tice H."/>
            <person name="Bruce D."/>
            <person name="Goodwin L."/>
            <person name="Pitluck S."/>
            <person name="Kiss H."/>
            <person name="Brettin T."/>
            <person name="Detter J.C."/>
            <person name="Han C."/>
            <person name="Kuske C.R."/>
            <person name="Schmutz J."/>
            <person name="Larimer F."/>
            <person name="Land M."/>
            <person name="Hauser L."/>
            <person name="Kyrpides N."/>
            <person name="Mikhailova N."/>
            <person name="Ingram L."/>
            <person name="Richardson P."/>
        </authorList>
    </citation>
    <scope>NUCLEOTIDE SEQUENCE [LARGE SCALE GENOMIC DNA]</scope>
    <source>
        <strain>ATCC 8739 / DSM 1576 / NBRC 3972 / NCIMB 8545 / WDCM 00012 / Crooks</strain>
    </source>
</reference>
<feature type="chain" id="PRO_1000087292" description="Probable lipid kinase YegS">
    <location>
        <begin position="1"/>
        <end position="299"/>
    </location>
</feature>
<feature type="domain" description="DAGKc" evidence="1">
    <location>
        <begin position="2"/>
        <end position="133"/>
    </location>
</feature>
<feature type="active site" description="Proton acceptor" evidence="1">
    <location>
        <position position="271"/>
    </location>
</feature>
<feature type="binding site" evidence="1">
    <location>
        <position position="40"/>
    </location>
    <ligand>
        <name>ATP</name>
        <dbReference type="ChEBI" id="CHEBI:30616"/>
    </ligand>
</feature>
<feature type="binding site" evidence="1">
    <location>
        <begin position="66"/>
        <end position="72"/>
    </location>
    <ligand>
        <name>ATP</name>
        <dbReference type="ChEBI" id="CHEBI:30616"/>
    </ligand>
</feature>
<feature type="binding site" evidence="1">
    <location>
        <position position="95"/>
    </location>
    <ligand>
        <name>ATP</name>
        <dbReference type="ChEBI" id="CHEBI:30616"/>
    </ligand>
</feature>
<feature type="binding site" evidence="1">
    <location>
        <position position="215"/>
    </location>
    <ligand>
        <name>Mg(2+)</name>
        <dbReference type="ChEBI" id="CHEBI:18420"/>
    </ligand>
</feature>
<feature type="binding site" evidence="1">
    <location>
        <position position="218"/>
    </location>
    <ligand>
        <name>Mg(2+)</name>
        <dbReference type="ChEBI" id="CHEBI:18420"/>
    </ligand>
</feature>
<feature type="binding site" evidence="1">
    <location>
        <position position="220"/>
    </location>
    <ligand>
        <name>Mg(2+)</name>
        <dbReference type="ChEBI" id="CHEBI:18420"/>
    </ligand>
</feature>
<keyword id="KW-0067">ATP-binding</keyword>
<keyword id="KW-0963">Cytoplasm</keyword>
<keyword id="KW-0418">Kinase</keyword>
<keyword id="KW-0444">Lipid biosynthesis</keyword>
<keyword id="KW-0443">Lipid metabolism</keyword>
<keyword id="KW-0460">Magnesium</keyword>
<keyword id="KW-0479">Metal-binding</keyword>
<keyword id="KW-0547">Nucleotide-binding</keyword>
<keyword id="KW-0594">Phospholipid biosynthesis</keyword>
<keyword id="KW-1208">Phospholipid metabolism</keyword>
<keyword id="KW-0808">Transferase</keyword>
<gene>
    <name evidence="1" type="primary">yegS</name>
    <name type="ordered locus">EcolC_1558</name>
</gene>
<sequence length="299" mass="32005">MAEFPASLLILNGKSTDNLPLREAIMLLREEGMTIHVRVTWEKGDAARYVEEARKLGVATVIAGGGDGTINEVSTALIQCEGDDIPALGILPLGTANDFATSVGIPEALDKALKLAIAGDAIAIDMAQVNKQTCFINMATGGFGTRITTETPEKLKAALGSVSYIIHGLMRMDTLQPDRCEIRGENFHWQGDALVIGIGNGRQAGGGQQLCPNALINDGLLQLRIFTGDEILPALVSTLKSDEDNPNIIEGASSWFDIQAPHDITFNLDGEPLSGQNFHIEILPAALRCRLPPDCPLLR</sequence>
<evidence type="ECO:0000255" key="1">
    <source>
        <dbReference type="HAMAP-Rule" id="MF_01377"/>
    </source>
</evidence>
<name>YEGS_ECOLC</name>
<dbReference type="EC" id="2.7.1.-" evidence="1"/>
<dbReference type="EMBL" id="CP000946">
    <property type="protein sequence ID" value="ACA77217.1"/>
    <property type="molecule type" value="Genomic_DNA"/>
</dbReference>
<dbReference type="RefSeq" id="WP_000807356.1">
    <property type="nucleotide sequence ID" value="NZ_MTFT01000031.1"/>
</dbReference>
<dbReference type="SMR" id="B1IYZ1"/>
<dbReference type="KEGG" id="ecl:EcolC_1558"/>
<dbReference type="HOGENOM" id="CLU_045532_1_1_6"/>
<dbReference type="GO" id="GO:0005737">
    <property type="term" value="C:cytoplasm"/>
    <property type="evidence" value="ECO:0007669"/>
    <property type="project" value="UniProtKB-SubCell"/>
</dbReference>
<dbReference type="GO" id="GO:0005886">
    <property type="term" value="C:plasma membrane"/>
    <property type="evidence" value="ECO:0007669"/>
    <property type="project" value="TreeGrafter"/>
</dbReference>
<dbReference type="GO" id="GO:0005524">
    <property type="term" value="F:ATP binding"/>
    <property type="evidence" value="ECO:0007669"/>
    <property type="project" value="UniProtKB-UniRule"/>
</dbReference>
<dbReference type="GO" id="GO:0001727">
    <property type="term" value="F:lipid kinase activity"/>
    <property type="evidence" value="ECO:0007669"/>
    <property type="project" value="UniProtKB-UniRule"/>
</dbReference>
<dbReference type="GO" id="GO:0000287">
    <property type="term" value="F:magnesium ion binding"/>
    <property type="evidence" value="ECO:0007669"/>
    <property type="project" value="UniProtKB-UniRule"/>
</dbReference>
<dbReference type="GO" id="GO:0008654">
    <property type="term" value="P:phospholipid biosynthetic process"/>
    <property type="evidence" value="ECO:0007669"/>
    <property type="project" value="UniProtKB-UniRule"/>
</dbReference>
<dbReference type="FunFam" id="2.60.200.40:FF:000008">
    <property type="entry name" value="Probable lipid kinase YegS"/>
    <property type="match status" value="1"/>
</dbReference>
<dbReference type="FunFam" id="3.40.50.10330:FF:000008">
    <property type="entry name" value="Probable lipid kinase YegS"/>
    <property type="match status" value="1"/>
</dbReference>
<dbReference type="Gene3D" id="2.60.200.40">
    <property type="match status" value="1"/>
</dbReference>
<dbReference type="Gene3D" id="3.40.50.10330">
    <property type="entry name" value="Probable inorganic polyphosphate/atp-NAD kinase, domain 1"/>
    <property type="match status" value="1"/>
</dbReference>
<dbReference type="HAMAP" id="MF_01377">
    <property type="entry name" value="YegS"/>
    <property type="match status" value="1"/>
</dbReference>
<dbReference type="InterPro" id="IPR017438">
    <property type="entry name" value="ATP-NAD_kinase_N"/>
</dbReference>
<dbReference type="InterPro" id="IPR005218">
    <property type="entry name" value="Diacylglycerol/lipid_kinase"/>
</dbReference>
<dbReference type="InterPro" id="IPR001206">
    <property type="entry name" value="Diacylglycerol_kinase_cat_dom"/>
</dbReference>
<dbReference type="InterPro" id="IPR022433">
    <property type="entry name" value="Lip_kinase_YegS"/>
</dbReference>
<dbReference type="InterPro" id="IPR050187">
    <property type="entry name" value="Lipid_Phosphate_FormReg"/>
</dbReference>
<dbReference type="InterPro" id="IPR016064">
    <property type="entry name" value="NAD/diacylglycerol_kinase_sf"/>
</dbReference>
<dbReference type="InterPro" id="IPR045540">
    <property type="entry name" value="YegS/DAGK_C"/>
</dbReference>
<dbReference type="NCBIfam" id="TIGR03702">
    <property type="entry name" value="lip_kinase_YegS"/>
    <property type="match status" value="1"/>
</dbReference>
<dbReference type="NCBIfam" id="NF009602">
    <property type="entry name" value="PRK13054.1"/>
    <property type="match status" value="1"/>
</dbReference>
<dbReference type="NCBIfam" id="TIGR00147">
    <property type="entry name" value="YegS/Rv2252/BmrU family lipid kinase"/>
    <property type="match status" value="1"/>
</dbReference>
<dbReference type="PANTHER" id="PTHR12358:SF106">
    <property type="entry name" value="LIPID KINASE YEGS"/>
    <property type="match status" value="1"/>
</dbReference>
<dbReference type="PANTHER" id="PTHR12358">
    <property type="entry name" value="SPHINGOSINE KINASE"/>
    <property type="match status" value="1"/>
</dbReference>
<dbReference type="Pfam" id="PF00781">
    <property type="entry name" value="DAGK_cat"/>
    <property type="match status" value="1"/>
</dbReference>
<dbReference type="Pfam" id="PF19279">
    <property type="entry name" value="YegS_C"/>
    <property type="match status" value="1"/>
</dbReference>
<dbReference type="SMART" id="SM00046">
    <property type="entry name" value="DAGKc"/>
    <property type="match status" value="1"/>
</dbReference>
<dbReference type="SUPFAM" id="SSF111331">
    <property type="entry name" value="NAD kinase/diacylglycerol kinase-like"/>
    <property type="match status" value="1"/>
</dbReference>
<dbReference type="PROSITE" id="PS50146">
    <property type="entry name" value="DAGK"/>
    <property type="match status" value="1"/>
</dbReference>
<organism>
    <name type="scientific">Escherichia coli (strain ATCC 8739 / DSM 1576 / NBRC 3972 / NCIMB 8545 / WDCM 00012 / Crooks)</name>
    <dbReference type="NCBI Taxonomy" id="481805"/>
    <lineage>
        <taxon>Bacteria</taxon>
        <taxon>Pseudomonadati</taxon>
        <taxon>Pseudomonadota</taxon>
        <taxon>Gammaproteobacteria</taxon>
        <taxon>Enterobacterales</taxon>
        <taxon>Enterobacteriaceae</taxon>
        <taxon>Escherichia</taxon>
    </lineage>
</organism>
<proteinExistence type="inferred from homology"/>